<accession>Q8K585</accession>
<accession>Q8K1F5</accession>
<dbReference type="EMBL" id="AF511040">
    <property type="protein sequence ID" value="AAM74157.1"/>
    <property type="molecule type" value="mRNA"/>
</dbReference>
<dbReference type="EMBL" id="AF507966">
    <property type="protein sequence ID" value="AAM33433.1"/>
    <property type="molecule type" value="mRNA"/>
</dbReference>
<dbReference type="RefSeq" id="NP_001399088.1">
    <molecule id="Q8K585-1"/>
    <property type="nucleotide sequence ID" value="NM_001412159.1"/>
</dbReference>
<dbReference type="RefSeq" id="NP_647543.2">
    <molecule id="Q8K585-1"/>
    <property type="nucleotide sequence ID" value="NM_139327.2"/>
</dbReference>
<dbReference type="RefSeq" id="XP_006256218.1">
    <property type="nucleotide sequence ID" value="XM_006256156.2"/>
</dbReference>
<dbReference type="RefSeq" id="XP_006256219.1">
    <molecule id="Q8K585-1"/>
    <property type="nucleotide sequence ID" value="XM_006256157.5"/>
</dbReference>
<dbReference type="RefSeq" id="XP_006256220.1">
    <molecule id="Q8K585-1"/>
    <property type="nucleotide sequence ID" value="XM_006256158.5"/>
</dbReference>
<dbReference type="RefSeq" id="XP_006256224.1">
    <molecule id="Q8K585-2"/>
    <property type="nucleotide sequence ID" value="XM_006256162.5"/>
</dbReference>
<dbReference type="RefSeq" id="XP_006256225.1">
    <molecule id="Q8K585-2"/>
    <property type="nucleotide sequence ID" value="XM_006256163.5"/>
</dbReference>
<dbReference type="RefSeq" id="XP_017457021.1">
    <property type="nucleotide sequence ID" value="XM_017601532.1"/>
</dbReference>
<dbReference type="RefSeq" id="XP_038954316.1">
    <molecule id="Q8K585-1"/>
    <property type="nucleotide sequence ID" value="XM_039098388.2"/>
</dbReference>
<dbReference type="RefSeq" id="XP_038954317.1">
    <molecule id="Q8K585-1"/>
    <property type="nucleotide sequence ID" value="XM_039098389.2"/>
</dbReference>
<dbReference type="RefSeq" id="XP_063135006.1">
    <molecule id="Q8K585-2"/>
    <property type="nucleotide sequence ID" value="XM_063278936.1"/>
</dbReference>
<dbReference type="RefSeq" id="XP_063135007.1">
    <molecule id="Q8K585-2"/>
    <property type="nucleotide sequence ID" value="XM_063278937.1"/>
</dbReference>
<dbReference type="RefSeq" id="XP_063135008.1">
    <molecule id="Q8K585-2"/>
    <property type="nucleotide sequence ID" value="XM_063278938.1"/>
</dbReference>
<dbReference type="BioGRID" id="250659">
    <property type="interactions" value="1"/>
</dbReference>
<dbReference type="CORUM" id="Q8K585"/>
<dbReference type="FunCoup" id="Q8K585">
    <property type="interactions" value="367"/>
</dbReference>
<dbReference type="STRING" id="10116.ENSRNOP00000000580"/>
<dbReference type="iPTMnet" id="Q8K585"/>
<dbReference type="PhosphoSitePlus" id="Q8K585"/>
<dbReference type="jPOST" id="Q8K585"/>
<dbReference type="PaxDb" id="10116-ENSRNOP00000000580"/>
<dbReference type="Ensembl" id="ENSRNOT00000113836.1">
    <molecule id="Q8K585-1"/>
    <property type="protein sequence ID" value="ENSRNOP00000086846.1"/>
    <property type="gene ID" value="ENSRNOG00000000488.5"/>
</dbReference>
<dbReference type="GeneID" id="117062"/>
<dbReference type="KEGG" id="rno:117062"/>
<dbReference type="UCSC" id="RGD:628699">
    <molecule id="Q8K585-1"/>
    <property type="organism name" value="rat"/>
</dbReference>
<dbReference type="AGR" id="RGD:628699"/>
<dbReference type="CTD" id="3159"/>
<dbReference type="RGD" id="628699">
    <property type="gene designation" value="Hmga1"/>
</dbReference>
<dbReference type="eggNOG" id="ENOG502S5JW">
    <property type="taxonomic scope" value="Eukaryota"/>
</dbReference>
<dbReference type="GeneTree" id="ENSGT00730000111329"/>
<dbReference type="HOGENOM" id="CLU_138888_0_0_1"/>
<dbReference type="InParanoid" id="Q8K585"/>
<dbReference type="OMA" id="FLFQFCE"/>
<dbReference type="PhylomeDB" id="Q8K585"/>
<dbReference type="TreeFam" id="TF351623"/>
<dbReference type="PRO" id="PR:Q8K585"/>
<dbReference type="Proteomes" id="UP000002494">
    <property type="component" value="Chromosome 20"/>
</dbReference>
<dbReference type="Bgee" id="ENSRNOG00000000488">
    <property type="expression patterns" value="Expressed in thymus and 20 other cell types or tissues"/>
</dbReference>
<dbReference type="GO" id="GO:0005737">
    <property type="term" value="C:cytoplasm"/>
    <property type="evidence" value="ECO:0000266"/>
    <property type="project" value="RGD"/>
</dbReference>
<dbReference type="GO" id="GO:0001673">
    <property type="term" value="C:male germ cell nucleus"/>
    <property type="evidence" value="ECO:0000266"/>
    <property type="project" value="RGD"/>
</dbReference>
<dbReference type="GO" id="GO:0005739">
    <property type="term" value="C:mitochondrion"/>
    <property type="evidence" value="ECO:0000266"/>
    <property type="project" value="RGD"/>
</dbReference>
<dbReference type="GO" id="GO:0005634">
    <property type="term" value="C:nucleus"/>
    <property type="evidence" value="ECO:0000250"/>
    <property type="project" value="UniProtKB"/>
</dbReference>
<dbReference type="GO" id="GO:0090575">
    <property type="term" value="C:RNA polymerase II transcription regulator complex"/>
    <property type="evidence" value="ECO:0000266"/>
    <property type="project" value="RGD"/>
</dbReference>
<dbReference type="GO" id="GO:0035985">
    <property type="term" value="C:senescence-associated heterochromatin focus"/>
    <property type="evidence" value="ECO:0000250"/>
    <property type="project" value="UniProtKB"/>
</dbReference>
<dbReference type="GO" id="GO:0106068">
    <property type="term" value="C:SUMO ligase complex"/>
    <property type="evidence" value="ECO:0000266"/>
    <property type="project" value="RGD"/>
</dbReference>
<dbReference type="GO" id="GO:0051575">
    <property type="term" value="F:5'-deoxyribose-5-phosphate lyase activity"/>
    <property type="evidence" value="ECO:0000266"/>
    <property type="project" value="RGD"/>
</dbReference>
<dbReference type="GO" id="GO:0003682">
    <property type="term" value="F:chromatin binding"/>
    <property type="evidence" value="ECO:0000266"/>
    <property type="project" value="RGD"/>
</dbReference>
<dbReference type="GO" id="GO:0000987">
    <property type="term" value="F:cis-regulatory region sequence-specific DNA binding"/>
    <property type="evidence" value="ECO:0000266"/>
    <property type="project" value="RGD"/>
</dbReference>
<dbReference type="GO" id="GO:0062037">
    <property type="term" value="F:D-loop DNA binding"/>
    <property type="evidence" value="ECO:0000266"/>
    <property type="project" value="RGD"/>
</dbReference>
<dbReference type="GO" id="GO:0003677">
    <property type="term" value="F:DNA binding"/>
    <property type="evidence" value="ECO:0000266"/>
    <property type="project" value="RGD"/>
</dbReference>
<dbReference type="GO" id="GO:0008301">
    <property type="term" value="F:DNA binding, bending"/>
    <property type="evidence" value="ECO:0000266"/>
    <property type="project" value="RGD"/>
</dbReference>
<dbReference type="GO" id="GO:0003906">
    <property type="term" value="F:DNA-(apurinic or apyrimidinic site) endonuclease activity"/>
    <property type="evidence" value="ECO:0000266"/>
    <property type="project" value="RGD"/>
</dbReference>
<dbReference type="GO" id="GO:0019899">
    <property type="term" value="F:enzyme binding"/>
    <property type="evidence" value="ECO:0000266"/>
    <property type="project" value="RGD"/>
</dbReference>
<dbReference type="GO" id="GO:0003680">
    <property type="term" value="F:minor groove of adenine-thymine-rich DNA binding"/>
    <property type="evidence" value="ECO:0000266"/>
    <property type="project" value="RGD"/>
</dbReference>
<dbReference type="GO" id="GO:0060090">
    <property type="term" value="F:molecular adaptor activity"/>
    <property type="evidence" value="ECO:0000266"/>
    <property type="project" value="RGD"/>
</dbReference>
<dbReference type="GO" id="GO:0140677">
    <property type="term" value="F:molecular function activator activity"/>
    <property type="evidence" value="ECO:0000266"/>
    <property type="project" value="RGD"/>
</dbReference>
<dbReference type="GO" id="GO:0042974">
    <property type="term" value="F:nuclear retinoic acid receptor binding"/>
    <property type="evidence" value="ECO:0000250"/>
    <property type="project" value="UniProtKB"/>
</dbReference>
<dbReference type="GO" id="GO:0046965">
    <property type="term" value="F:nuclear retinoid X receptor binding"/>
    <property type="evidence" value="ECO:0000250"/>
    <property type="project" value="UniProtKB"/>
</dbReference>
<dbReference type="GO" id="GO:0042975">
    <property type="term" value="F:peroxisome proliferator activated receptor binding"/>
    <property type="evidence" value="ECO:0000250"/>
    <property type="project" value="UniProtKB"/>
</dbReference>
<dbReference type="GO" id="GO:0003723">
    <property type="term" value="F:RNA binding"/>
    <property type="evidence" value="ECO:0000266"/>
    <property type="project" value="RGD"/>
</dbReference>
<dbReference type="GO" id="GO:0000978">
    <property type="term" value="F:RNA polymerase II cis-regulatory region sequence-specific DNA binding"/>
    <property type="evidence" value="ECO:0000266"/>
    <property type="project" value="RGD"/>
</dbReference>
<dbReference type="GO" id="GO:0000979">
    <property type="term" value="F:RNA polymerase II core promoter sequence-specific DNA binding"/>
    <property type="evidence" value="ECO:0000266"/>
    <property type="project" value="RGD"/>
</dbReference>
<dbReference type="GO" id="GO:0003713">
    <property type="term" value="F:transcription coactivator activity"/>
    <property type="evidence" value="ECO:0000250"/>
    <property type="project" value="UniProtKB"/>
</dbReference>
<dbReference type="GO" id="GO:0003712">
    <property type="term" value="F:transcription coregulator activity"/>
    <property type="evidence" value="ECO:0000318"/>
    <property type="project" value="GO_Central"/>
</dbReference>
<dbReference type="GO" id="GO:0001221">
    <property type="term" value="F:transcription coregulator binding"/>
    <property type="evidence" value="ECO:0000250"/>
    <property type="project" value="UniProtKB"/>
</dbReference>
<dbReference type="GO" id="GO:0006914">
    <property type="term" value="P:autophagy"/>
    <property type="evidence" value="ECO:0000266"/>
    <property type="project" value="RGD"/>
</dbReference>
<dbReference type="GO" id="GO:0030183">
    <property type="term" value="P:B cell differentiation"/>
    <property type="evidence" value="ECO:0000266"/>
    <property type="project" value="RGD"/>
</dbReference>
<dbReference type="GO" id="GO:0006284">
    <property type="term" value="P:base-excision repair"/>
    <property type="evidence" value="ECO:0000266"/>
    <property type="project" value="RGD"/>
</dbReference>
<dbReference type="GO" id="GO:0008283">
    <property type="term" value="P:cell population proliferation"/>
    <property type="evidence" value="ECO:0000266"/>
    <property type="project" value="RGD"/>
</dbReference>
<dbReference type="GO" id="GO:0006325">
    <property type="term" value="P:chromatin organization"/>
    <property type="evidence" value="ECO:0000266"/>
    <property type="project" value="RGD"/>
</dbReference>
<dbReference type="GO" id="GO:0030218">
    <property type="term" value="P:erythrocyte differentiation"/>
    <property type="evidence" value="ECO:0000266"/>
    <property type="project" value="RGD"/>
</dbReference>
<dbReference type="GO" id="GO:0010467">
    <property type="term" value="P:gene expression"/>
    <property type="evidence" value="ECO:0000266"/>
    <property type="project" value="RGD"/>
</dbReference>
<dbReference type="GO" id="GO:0042593">
    <property type="term" value="P:glucose homeostasis"/>
    <property type="evidence" value="ECO:0000266"/>
    <property type="project" value="RGD"/>
</dbReference>
<dbReference type="GO" id="GO:0007507">
    <property type="term" value="P:heart development"/>
    <property type="evidence" value="ECO:0000266"/>
    <property type="project" value="RGD"/>
</dbReference>
<dbReference type="GO" id="GO:0006925">
    <property type="term" value="P:inflammatory cell apoptotic process"/>
    <property type="evidence" value="ECO:0000266"/>
    <property type="project" value="RGD"/>
</dbReference>
<dbReference type="GO" id="GO:0006954">
    <property type="term" value="P:inflammatory response"/>
    <property type="evidence" value="ECO:0000266"/>
    <property type="project" value="RGD"/>
</dbReference>
<dbReference type="GO" id="GO:0008286">
    <property type="term" value="P:insulin receptor signaling pathway"/>
    <property type="evidence" value="ECO:0000266"/>
    <property type="project" value="RGD"/>
</dbReference>
<dbReference type="GO" id="GO:0030073">
    <property type="term" value="P:insulin secretion"/>
    <property type="evidence" value="ECO:0000266"/>
    <property type="project" value="RGD"/>
</dbReference>
<dbReference type="GO" id="GO:0060425">
    <property type="term" value="P:lung morphogenesis"/>
    <property type="evidence" value="ECO:0000266"/>
    <property type="project" value="RGD"/>
</dbReference>
<dbReference type="GO" id="GO:0002320">
    <property type="term" value="P:lymphoid progenitor cell differentiation"/>
    <property type="evidence" value="ECO:0000266"/>
    <property type="project" value="RGD"/>
</dbReference>
<dbReference type="GO" id="GO:0035264">
    <property type="term" value="P:multicellular organism growth"/>
    <property type="evidence" value="ECO:0000266"/>
    <property type="project" value="RGD"/>
</dbReference>
<dbReference type="GO" id="GO:0008285">
    <property type="term" value="P:negative regulation of cell population proliferation"/>
    <property type="evidence" value="ECO:0000250"/>
    <property type="project" value="UniProtKB"/>
</dbReference>
<dbReference type="GO" id="GO:0045892">
    <property type="term" value="P:negative regulation of DNA-templated transcription"/>
    <property type="evidence" value="ECO:0000250"/>
    <property type="project" value="UniProtKB"/>
</dbReference>
<dbReference type="GO" id="GO:0000122">
    <property type="term" value="P:negative regulation of transcription by RNA polymerase II"/>
    <property type="evidence" value="ECO:0000266"/>
    <property type="project" value="RGD"/>
</dbReference>
<dbReference type="GO" id="GO:0022008">
    <property type="term" value="P:neurogenesis"/>
    <property type="evidence" value="ECO:0000266"/>
    <property type="project" value="RGD"/>
</dbReference>
<dbReference type="GO" id="GO:0090402">
    <property type="term" value="P:oncogene-induced cell senescence"/>
    <property type="evidence" value="ECO:0000250"/>
    <property type="project" value="UniProtKB"/>
</dbReference>
<dbReference type="GO" id="GO:0035357">
    <property type="term" value="P:peroxisome proliferator activated receptor signaling pathway"/>
    <property type="evidence" value="ECO:0000266"/>
    <property type="project" value="RGD"/>
</dbReference>
<dbReference type="GO" id="GO:0045893">
    <property type="term" value="P:positive regulation of DNA-templated transcription"/>
    <property type="evidence" value="ECO:0000250"/>
    <property type="project" value="UniProtKB"/>
</dbReference>
<dbReference type="GO" id="GO:0045944">
    <property type="term" value="P:positive regulation of transcription by RNA polymerase II"/>
    <property type="evidence" value="ECO:0000266"/>
    <property type="project" value="RGD"/>
</dbReference>
<dbReference type="GO" id="GO:0006355">
    <property type="term" value="P:regulation of DNA-templated transcription"/>
    <property type="evidence" value="ECO:0000318"/>
    <property type="project" value="GO_Central"/>
</dbReference>
<dbReference type="GO" id="GO:0051896">
    <property type="term" value="P:regulation of phosphatidylinositol 3-kinase/protein kinase B signal transduction"/>
    <property type="evidence" value="ECO:0000266"/>
    <property type="project" value="RGD"/>
</dbReference>
<dbReference type="GO" id="GO:0003016">
    <property type="term" value="P:respiratory system process"/>
    <property type="evidence" value="ECO:0000266"/>
    <property type="project" value="RGD"/>
</dbReference>
<dbReference type="GO" id="GO:0051591">
    <property type="term" value="P:response to cAMP"/>
    <property type="evidence" value="ECO:0000266"/>
    <property type="project" value="RGD"/>
</dbReference>
<dbReference type="GO" id="GO:0033762">
    <property type="term" value="P:response to glucagon"/>
    <property type="evidence" value="ECO:0000266"/>
    <property type="project" value="RGD"/>
</dbReference>
<dbReference type="GO" id="GO:0009749">
    <property type="term" value="P:response to glucose"/>
    <property type="evidence" value="ECO:0000266"/>
    <property type="project" value="RGD"/>
</dbReference>
<dbReference type="GO" id="GO:0032868">
    <property type="term" value="P:response to insulin"/>
    <property type="evidence" value="ECO:0000266"/>
    <property type="project" value="RGD"/>
</dbReference>
<dbReference type="GO" id="GO:0009611">
    <property type="term" value="P:response to wounding"/>
    <property type="evidence" value="ECO:0000266"/>
    <property type="project" value="RGD"/>
</dbReference>
<dbReference type="GO" id="GO:0007283">
    <property type="term" value="P:spermatogenesis"/>
    <property type="evidence" value="ECO:0000266"/>
    <property type="project" value="RGD"/>
</dbReference>
<dbReference type="GO" id="GO:0030217">
    <property type="term" value="P:T cell differentiation"/>
    <property type="evidence" value="ECO:0000266"/>
    <property type="project" value="RGD"/>
</dbReference>
<dbReference type="GO" id="GO:0030878">
    <property type="term" value="P:thyroid gland development"/>
    <property type="evidence" value="ECO:0000266"/>
    <property type="project" value="RGD"/>
</dbReference>
<dbReference type="InterPro" id="IPR017956">
    <property type="entry name" value="AT_hook_DNA-bd_motif"/>
</dbReference>
<dbReference type="InterPro" id="IPR000116">
    <property type="entry name" value="HMGA"/>
</dbReference>
<dbReference type="InterPro" id="IPR000637">
    <property type="entry name" value="HMGI/Y_DNA-bd_CS"/>
</dbReference>
<dbReference type="PANTHER" id="PTHR23341:SF1">
    <property type="entry name" value="HIGH MOBILITY GROUP PROTEIN HMG-I_HMG-Y"/>
    <property type="match status" value="1"/>
</dbReference>
<dbReference type="PANTHER" id="PTHR23341">
    <property type="entry name" value="HIGH MOBILITY GROUP PROTEINS HMG-A AND C"/>
    <property type="match status" value="1"/>
</dbReference>
<dbReference type="Pfam" id="PF02178">
    <property type="entry name" value="AT_hook"/>
    <property type="match status" value="3"/>
</dbReference>
<dbReference type="PRINTS" id="PR00929">
    <property type="entry name" value="ATHOOK"/>
</dbReference>
<dbReference type="PRINTS" id="PR00930">
    <property type="entry name" value="HIGHMOBLTYIY"/>
</dbReference>
<dbReference type="SMART" id="SM00384">
    <property type="entry name" value="AT_hook"/>
    <property type="match status" value="3"/>
</dbReference>
<dbReference type="PROSITE" id="PS00354">
    <property type="entry name" value="HMGI_Y"/>
    <property type="match status" value="3"/>
</dbReference>
<protein>
    <recommendedName>
        <fullName>High mobility group protein HMG-I/HMG-Y</fullName>
        <shortName>HMG-I(Y)</shortName>
    </recommendedName>
    <alternativeName>
        <fullName>High mobility group AT-hook protein 1</fullName>
        <shortName>High mobility group protein A1</shortName>
    </alternativeName>
</protein>
<organism>
    <name type="scientific">Rattus norvegicus</name>
    <name type="common">Rat</name>
    <dbReference type="NCBI Taxonomy" id="10116"/>
    <lineage>
        <taxon>Eukaryota</taxon>
        <taxon>Metazoa</taxon>
        <taxon>Chordata</taxon>
        <taxon>Craniata</taxon>
        <taxon>Vertebrata</taxon>
        <taxon>Euteleostomi</taxon>
        <taxon>Mammalia</taxon>
        <taxon>Eutheria</taxon>
        <taxon>Euarchontoglires</taxon>
        <taxon>Glires</taxon>
        <taxon>Rodentia</taxon>
        <taxon>Myomorpha</taxon>
        <taxon>Muroidea</taxon>
        <taxon>Muridae</taxon>
        <taxon>Murinae</taxon>
        <taxon>Rattus</taxon>
    </lineage>
</organism>
<comment type="function">
    <text evidence="1">HMG-I/Y bind preferentially to the minor groove of A+T rich regions in double-stranded DNA. It is suggested that these proteins could function in nucleosome phasing and in the 3'-end processing of mRNA transcripts. They are also involved in the transcription regulation of genes containing, or in close proximity to A+T-rich regions (By similarity).</text>
</comment>
<comment type="subunit">
    <text evidence="1">Interacts with HIPK2.</text>
</comment>
<comment type="subcellular location">
    <subcellularLocation>
        <location>Nucleus</location>
    </subcellularLocation>
    <subcellularLocation>
        <location>Chromosome</location>
    </subcellularLocation>
</comment>
<comment type="alternative products">
    <event type="alternative splicing"/>
    <isoform>
        <id>Q8K585-1</id>
        <name>HMG-I</name>
        <name>HMGA1a</name>
        <sequence type="displayed"/>
    </isoform>
    <isoform>
        <id>Q8K585-2</id>
        <name>HMG-Y</name>
        <name>HMGA1b</name>
        <sequence type="described" ref="VSP_016395"/>
    </isoform>
</comment>
<comment type="PTM">
    <text evidence="1">Isoforms HMG-I and HMG-Y can be phosphorylated by HIPK2. Phosphorylation may modulate DNA-binding affinity (By similarity).</text>
</comment>
<comment type="PTM">
    <text evidence="1">Methylation at Arg-58 is mutually exclusive with methylation at Arg-60.</text>
</comment>
<comment type="mass spectrometry">
    <text>With 1 acetyl and 2 phosphate groups.</text>
</comment>
<comment type="mass spectrometry">
    <text>With 1 acetyl and 3 phosphate groups.</text>
</comment>
<comment type="mass spectrometry">
    <text>With 1 acetyl, 1 methyl and 2 phosphate groups.</text>
</comment>
<comment type="mass spectrometry">
    <text>With 1 acetyl, 1 methyl and 3 phosphate groups.</text>
</comment>
<comment type="similarity">
    <text evidence="7">Belongs to the HMGA family.</text>
</comment>
<proteinExistence type="evidence at protein level"/>
<feature type="initiator methionine" description="Removed" evidence="2">
    <location>
        <position position="1"/>
    </location>
</feature>
<feature type="chain" id="PRO_0000206710" description="High mobility group protein HMG-I/HMG-Y">
    <location>
        <begin position="2"/>
        <end position="107"/>
    </location>
</feature>
<feature type="DNA-binding region" description="A.T hook 1">
    <location>
        <begin position="21"/>
        <end position="31"/>
    </location>
</feature>
<feature type="DNA-binding region" description="A.T hook 2">
    <location>
        <begin position="53"/>
        <end position="63"/>
    </location>
</feature>
<feature type="DNA-binding region" description="A.T hook 3">
    <location>
        <begin position="78"/>
        <end position="89"/>
    </location>
</feature>
<feature type="region of interest" description="Disordered" evidence="4">
    <location>
        <begin position="1"/>
        <end position="107"/>
    </location>
</feature>
<feature type="region of interest" description="Interaction with HIPK2" evidence="1">
    <location>
        <begin position="53"/>
        <end position="77"/>
    </location>
</feature>
<feature type="compositionally biased region" description="Polar residues" evidence="4">
    <location>
        <begin position="1"/>
        <end position="13"/>
    </location>
</feature>
<feature type="compositionally biased region" description="Basic and acidic residues" evidence="4">
    <location>
        <begin position="15"/>
        <end position="24"/>
    </location>
</feature>
<feature type="compositionally biased region" description="Basic residues" evidence="4">
    <location>
        <begin position="55"/>
        <end position="74"/>
    </location>
</feature>
<feature type="compositionally biased region" description="Acidic residues" evidence="4">
    <location>
        <begin position="93"/>
        <end position="107"/>
    </location>
</feature>
<feature type="modified residue" description="N-acetylserine" evidence="2">
    <location>
        <position position="2"/>
    </location>
</feature>
<feature type="modified residue" description="N6-acetyllysine" evidence="2">
    <location>
        <position position="7"/>
    </location>
</feature>
<feature type="modified residue" description="ADP-ribosylserine" evidence="3">
    <location>
        <position position="8"/>
    </location>
</feature>
<feature type="modified residue" description="ADP-ribosylserine; alternate" evidence="3">
    <location>
        <position position="9"/>
    </location>
</feature>
<feature type="modified residue" description="Phosphoserine; alternate" evidence="3">
    <location>
        <position position="9"/>
    </location>
</feature>
<feature type="modified residue" description="N6-acetyllysine; alternate" evidence="3">
    <location>
        <position position="15"/>
    </location>
</feature>
<feature type="modified residue" description="Asymmetric dimethylarginine; alternate" evidence="3">
    <location>
        <position position="26"/>
    </location>
</feature>
<feature type="modified residue" description="Omega-N-methylarginine; alternate" evidence="3">
    <location>
        <position position="26"/>
    </location>
</feature>
<feature type="modified residue" description="Symmetric dimethylarginine; alternate" evidence="3">
    <location>
        <position position="26"/>
    </location>
</feature>
<feature type="modified residue" description="Phosphoserine; by HIPK2 and CDC2" evidence="3">
    <location>
        <position position="36"/>
    </location>
</feature>
<feature type="modified residue" description="Phosphothreonine" evidence="3">
    <location>
        <position position="39"/>
    </location>
</feature>
<feature type="modified residue" description="Phosphoserine" evidence="3">
    <location>
        <position position="44"/>
    </location>
</feature>
<feature type="modified residue" description="Phosphoserine" evidence="3">
    <location>
        <position position="49"/>
    </location>
</feature>
<feature type="modified residue" description="Phosphothreonine; by HIPK2 and CDC2" evidence="3">
    <location>
        <position position="53"/>
    </location>
</feature>
<feature type="modified residue" description="Asymmetric dimethylarginine; by PRMT6; alternate" evidence="3">
    <location>
        <position position="58"/>
    </location>
</feature>
<feature type="modified residue" description="Omega-N-methylarginine; by PRMT6; alternate" evidence="3">
    <location>
        <position position="58"/>
    </location>
</feature>
<feature type="modified residue" description="Asymmetric dimethylarginine; by PRMT6; alternate" evidence="3">
    <location>
        <position position="60"/>
    </location>
</feature>
<feature type="modified residue" description="Omega-N-methylarginine; by PRMT6; alternate" evidence="3">
    <location>
        <position position="60"/>
    </location>
</feature>
<feature type="modified residue" description="Phosphothreonine; by HIPK2 and CDC2" evidence="3">
    <location>
        <position position="78"/>
    </location>
</feature>
<feature type="modified residue" description="Phosphoserine" evidence="3">
    <location>
        <position position="99"/>
    </location>
</feature>
<feature type="modified residue" description="Phosphoserine" evidence="3">
    <location>
        <position position="102"/>
    </location>
</feature>
<feature type="modified residue" description="Phosphoserine" evidence="3">
    <location>
        <position position="103"/>
    </location>
</feature>
<feature type="cross-link" description="Glycyl lysine isopeptide (Lys-Gly) (interchain with G-Cter in SUMO2); alternate" evidence="3">
    <location>
        <position position="15"/>
    </location>
</feature>
<feature type="splice variant" id="VSP_016395" description="In isoform HMG-Y." evidence="6">
    <location>
        <begin position="35"/>
        <end position="45"/>
    </location>
</feature>
<feature type="sequence conflict" description="In Ref. 2; AAM33433." evidence="7" ref="2">
    <original>V</original>
    <variation>G</variation>
    <location>
        <position position="5"/>
    </location>
</feature>
<gene>
    <name type="primary">Hmga1</name>
</gene>
<evidence type="ECO:0000250" key="1"/>
<evidence type="ECO:0000250" key="2">
    <source>
        <dbReference type="UniProtKB" id="P17095"/>
    </source>
</evidence>
<evidence type="ECO:0000250" key="3">
    <source>
        <dbReference type="UniProtKB" id="P17096"/>
    </source>
</evidence>
<evidence type="ECO:0000256" key="4">
    <source>
        <dbReference type="SAM" id="MobiDB-lite"/>
    </source>
</evidence>
<evidence type="ECO:0000269" key="5">
    <source>
    </source>
</evidence>
<evidence type="ECO:0000303" key="6">
    <source>
    </source>
</evidence>
<evidence type="ECO:0000305" key="7"/>
<keyword id="KW-0007">Acetylation</keyword>
<keyword id="KW-0013">ADP-ribosylation</keyword>
<keyword id="KW-0025">Alternative splicing</keyword>
<keyword id="KW-0158">Chromosome</keyword>
<keyword id="KW-0238">DNA-binding</keyword>
<keyword id="KW-1017">Isopeptide bond</keyword>
<keyword id="KW-0488">Methylation</keyword>
<keyword id="KW-0539">Nucleus</keyword>
<keyword id="KW-0597">Phosphoprotein</keyword>
<keyword id="KW-1185">Reference proteome</keyword>
<keyword id="KW-0677">Repeat</keyword>
<keyword id="KW-0804">Transcription</keyword>
<keyword id="KW-0805">Transcription regulation</keyword>
<keyword id="KW-0832">Ubl conjugation</keyword>
<name>HMGA1_RAT</name>
<sequence>MSESVSKSSQPLASKQEKDGTEKRGRGRPRKQPSVSPGTALVGSQKEPSEVPTPKRPRGRPKGSKNKGTAKTRKVTTTPGRKPRGRPKKLEKEEEEGISQESSEEEQ</sequence>
<reference key="1">
    <citation type="journal article" date="2003" name="Biochemistry">
        <title>During apoptosis of tumor cells HMGA1a protein undergoes methylation: identification of the modification site by mass spectrometry.</title>
        <authorList>
            <person name="Sgarra R."/>
            <person name="Diana F."/>
            <person name="Bellarosa C."/>
            <person name="Dekleva V."/>
            <person name="Rustighi A."/>
            <person name="Toller M."/>
            <person name="Manfioletti G."/>
            <person name="Giancotti V."/>
        </authorList>
    </citation>
    <scope>NUCLEOTIDE SEQUENCE [MRNA] (ISOFORMS HMG-I AND HMG-Y)</scope>
    <scope>PHOSPHORYLATION</scope>
    <scope>METHYLATION AT ARG-26</scope>
    <scope>MASS SPECTROMETRY</scope>
    <source>
        <strain>COP</strain>
        <tissue>Prostatic carcinoma</tissue>
    </source>
</reference>
<reference key="2">
    <citation type="submission" date="2002-04" db="EMBL/GenBank/DDBJ databases">
        <authorList>
            <person name="Claus P."/>
        </authorList>
    </citation>
    <scope>NUCLEOTIDE SEQUENCE [MRNA] (ISOFORM HMG-I)</scope>
    <source>
        <strain>Sprague-Dawley</strain>
        <tissue>Lung</tissue>
    </source>
</reference>
<reference key="3">
    <citation type="journal article" date="2012" name="Nat. Commun.">
        <title>Quantitative maps of protein phosphorylation sites across 14 different rat organs and tissues.</title>
        <authorList>
            <person name="Lundby A."/>
            <person name="Secher A."/>
            <person name="Lage K."/>
            <person name="Nordsborg N.B."/>
            <person name="Dmytriyev A."/>
            <person name="Lundby C."/>
            <person name="Olsen J.V."/>
        </authorList>
    </citation>
    <scope>IDENTIFICATION BY MASS SPECTROMETRY [LARGE SCALE ANALYSIS]</scope>
</reference>